<reference key="1">
    <citation type="submission" date="2008-10" db="EMBL/GenBank/DDBJ databases">
        <title>The complete genome sequence of Helicobacter pylori strain P12.</title>
        <authorList>
            <person name="Fischer W."/>
            <person name="Windhager L."/>
            <person name="Karnholz A."/>
            <person name="Zeiller M."/>
            <person name="Zimmer R."/>
            <person name="Haas R."/>
        </authorList>
    </citation>
    <scope>NUCLEOTIDE SEQUENCE [LARGE SCALE GENOMIC DNA]</scope>
    <source>
        <strain>P12</strain>
    </source>
</reference>
<accession>B6JNG1</accession>
<feature type="chain" id="PRO_1000091626" description="Ribonuclease HII">
    <location>
        <begin position="1"/>
        <end position="204"/>
    </location>
</feature>
<feature type="domain" description="RNase H type-2" evidence="2">
    <location>
        <begin position="1"/>
        <end position="197"/>
    </location>
</feature>
<feature type="binding site" evidence="1">
    <location>
        <position position="6"/>
    </location>
    <ligand>
        <name>a divalent metal cation</name>
        <dbReference type="ChEBI" id="CHEBI:60240"/>
    </ligand>
</feature>
<feature type="binding site" evidence="1">
    <location>
        <position position="7"/>
    </location>
    <ligand>
        <name>a divalent metal cation</name>
        <dbReference type="ChEBI" id="CHEBI:60240"/>
    </ligand>
</feature>
<feature type="binding site" evidence="1">
    <location>
        <position position="103"/>
    </location>
    <ligand>
        <name>a divalent metal cation</name>
        <dbReference type="ChEBI" id="CHEBI:60240"/>
    </ligand>
</feature>
<gene>
    <name evidence="1" type="primary">rnhB</name>
    <name type="ordered locus">HPP12_1287</name>
</gene>
<proteinExistence type="inferred from homology"/>
<dbReference type="EC" id="3.1.26.4" evidence="1"/>
<dbReference type="EMBL" id="CP001217">
    <property type="protein sequence ID" value="ACJ08439.1"/>
    <property type="molecule type" value="Genomic_DNA"/>
</dbReference>
<dbReference type="SMR" id="B6JNG1"/>
<dbReference type="KEGG" id="hpp:HPP12_1287"/>
<dbReference type="HOGENOM" id="CLU_036532_3_1_7"/>
<dbReference type="Proteomes" id="UP000008198">
    <property type="component" value="Chromosome"/>
</dbReference>
<dbReference type="GO" id="GO:0005737">
    <property type="term" value="C:cytoplasm"/>
    <property type="evidence" value="ECO:0007669"/>
    <property type="project" value="UniProtKB-SubCell"/>
</dbReference>
<dbReference type="GO" id="GO:0032299">
    <property type="term" value="C:ribonuclease H2 complex"/>
    <property type="evidence" value="ECO:0007669"/>
    <property type="project" value="TreeGrafter"/>
</dbReference>
<dbReference type="GO" id="GO:0030145">
    <property type="term" value="F:manganese ion binding"/>
    <property type="evidence" value="ECO:0007669"/>
    <property type="project" value="UniProtKB-UniRule"/>
</dbReference>
<dbReference type="GO" id="GO:0003723">
    <property type="term" value="F:RNA binding"/>
    <property type="evidence" value="ECO:0007669"/>
    <property type="project" value="InterPro"/>
</dbReference>
<dbReference type="GO" id="GO:0004523">
    <property type="term" value="F:RNA-DNA hybrid ribonuclease activity"/>
    <property type="evidence" value="ECO:0007669"/>
    <property type="project" value="UniProtKB-UniRule"/>
</dbReference>
<dbReference type="GO" id="GO:0043137">
    <property type="term" value="P:DNA replication, removal of RNA primer"/>
    <property type="evidence" value="ECO:0007669"/>
    <property type="project" value="TreeGrafter"/>
</dbReference>
<dbReference type="GO" id="GO:0006298">
    <property type="term" value="P:mismatch repair"/>
    <property type="evidence" value="ECO:0007669"/>
    <property type="project" value="TreeGrafter"/>
</dbReference>
<dbReference type="CDD" id="cd07182">
    <property type="entry name" value="RNase_HII_bacteria_HII_like"/>
    <property type="match status" value="1"/>
</dbReference>
<dbReference type="Gene3D" id="3.30.420.10">
    <property type="entry name" value="Ribonuclease H-like superfamily/Ribonuclease H"/>
    <property type="match status" value="1"/>
</dbReference>
<dbReference type="HAMAP" id="MF_00052_B">
    <property type="entry name" value="RNase_HII_B"/>
    <property type="match status" value="1"/>
</dbReference>
<dbReference type="InterPro" id="IPR022898">
    <property type="entry name" value="RNase_HII"/>
</dbReference>
<dbReference type="InterPro" id="IPR001352">
    <property type="entry name" value="RNase_HII/HIII"/>
</dbReference>
<dbReference type="InterPro" id="IPR024567">
    <property type="entry name" value="RNase_HII/HIII_dom"/>
</dbReference>
<dbReference type="InterPro" id="IPR012337">
    <property type="entry name" value="RNaseH-like_sf"/>
</dbReference>
<dbReference type="InterPro" id="IPR036397">
    <property type="entry name" value="RNaseH_sf"/>
</dbReference>
<dbReference type="NCBIfam" id="NF000595">
    <property type="entry name" value="PRK00015.1-3"/>
    <property type="match status" value="1"/>
</dbReference>
<dbReference type="NCBIfam" id="NF011119">
    <property type="entry name" value="PRK14550.1"/>
    <property type="match status" value="1"/>
</dbReference>
<dbReference type="PANTHER" id="PTHR10954">
    <property type="entry name" value="RIBONUCLEASE H2 SUBUNIT A"/>
    <property type="match status" value="1"/>
</dbReference>
<dbReference type="PANTHER" id="PTHR10954:SF18">
    <property type="entry name" value="RIBONUCLEASE HII"/>
    <property type="match status" value="1"/>
</dbReference>
<dbReference type="Pfam" id="PF01351">
    <property type="entry name" value="RNase_HII"/>
    <property type="match status" value="1"/>
</dbReference>
<dbReference type="SUPFAM" id="SSF53098">
    <property type="entry name" value="Ribonuclease H-like"/>
    <property type="match status" value="1"/>
</dbReference>
<dbReference type="PROSITE" id="PS51975">
    <property type="entry name" value="RNASE_H_2"/>
    <property type="match status" value="1"/>
</dbReference>
<keyword id="KW-0963">Cytoplasm</keyword>
<keyword id="KW-0255">Endonuclease</keyword>
<keyword id="KW-0378">Hydrolase</keyword>
<keyword id="KW-0464">Manganese</keyword>
<keyword id="KW-0479">Metal-binding</keyword>
<keyword id="KW-0540">Nuclease</keyword>
<comment type="function">
    <text evidence="1">Endonuclease that specifically degrades the RNA of RNA-DNA hybrids.</text>
</comment>
<comment type="catalytic activity">
    <reaction evidence="1">
        <text>Endonucleolytic cleavage to 5'-phosphomonoester.</text>
        <dbReference type="EC" id="3.1.26.4"/>
    </reaction>
</comment>
<comment type="cofactor">
    <cofactor evidence="1">
        <name>Mn(2+)</name>
        <dbReference type="ChEBI" id="CHEBI:29035"/>
    </cofactor>
    <cofactor evidence="1">
        <name>Mg(2+)</name>
        <dbReference type="ChEBI" id="CHEBI:18420"/>
    </cofactor>
    <text evidence="1">Manganese or magnesium. Binds 1 divalent metal ion per monomer in the absence of substrate. May bind a second metal ion after substrate binding.</text>
</comment>
<comment type="subcellular location">
    <subcellularLocation>
        <location evidence="1">Cytoplasm</location>
    </subcellularLocation>
</comment>
<comment type="similarity">
    <text evidence="1">Belongs to the RNase HII family.</text>
</comment>
<organism>
    <name type="scientific">Helicobacter pylori (strain P12)</name>
    <dbReference type="NCBI Taxonomy" id="570508"/>
    <lineage>
        <taxon>Bacteria</taxon>
        <taxon>Pseudomonadati</taxon>
        <taxon>Campylobacterota</taxon>
        <taxon>Epsilonproteobacteria</taxon>
        <taxon>Campylobacterales</taxon>
        <taxon>Helicobacteraceae</taxon>
        <taxon>Helicobacter</taxon>
    </lineage>
</organism>
<evidence type="ECO:0000255" key="1">
    <source>
        <dbReference type="HAMAP-Rule" id="MF_00052"/>
    </source>
</evidence>
<evidence type="ECO:0000255" key="2">
    <source>
        <dbReference type="PROSITE-ProRule" id="PRU01319"/>
    </source>
</evidence>
<name>RNH2_HELP2</name>
<sequence length="204" mass="22719">MILGIDEAGRGCLAGSLFVAGVACNDQTALELLKMGLKDSKKLSLKKRFFLEDKIKTHGKVKFFVVKKSANEIDNLGLGACLKLAIQEILENNRSLANEIKIDGNTAFGLNKRYPNIQTIIKGDETIAQIAMASVLAKAFKDREMLELHALFKEYGWDKNCGYGTKQHIEAITKLGATPFHRHSFTLKNCILNPKLLEVEQRLI</sequence>
<protein>
    <recommendedName>
        <fullName evidence="1">Ribonuclease HII</fullName>
        <shortName evidence="1">RNase HII</shortName>
        <ecNumber evidence="1">3.1.26.4</ecNumber>
    </recommendedName>
</protein>